<name>RR17_THAPS</name>
<feature type="chain" id="PRO_0000276860" description="Small ribosomal subunit protein uS17c">
    <location>
        <begin position="1"/>
        <end position="84"/>
    </location>
</feature>
<comment type="function">
    <text evidence="1">One of the primary rRNA binding proteins, it binds specifically to the 5'-end of 16S ribosomal RNA.</text>
</comment>
<comment type="subunit">
    <text evidence="1">Part of the 30S ribosomal subunit.</text>
</comment>
<comment type="subcellular location">
    <subcellularLocation>
        <location>Plastid</location>
        <location>Chloroplast</location>
    </subcellularLocation>
</comment>
<comment type="similarity">
    <text evidence="2">Belongs to the universal ribosomal protein uS17 family.</text>
</comment>
<evidence type="ECO:0000250" key="1"/>
<evidence type="ECO:0000305" key="2"/>
<sequence>MPVKEKVGVVISNKMQKTVVVKVESRYPHPIYSKTMIKTRKYLAHDEMSECNIGDQVLVQECRPLSKKKRWSVARIISRSSLIT</sequence>
<keyword id="KW-0150">Chloroplast</keyword>
<keyword id="KW-0934">Plastid</keyword>
<keyword id="KW-0687">Ribonucleoprotein</keyword>
<keyword id="KW-0689">Ribosomal protein</keyword>
<keyword id="KW-0694">RNA-binding</keyword>
<keyword id="KW-0699">rRNA-binding</keyword>
<accession>A0T0Y2</accession>
<dbReference type="EMBL" id="EF067921">
    <property type="protein sequence ID" value="ABK20817.1"/>
    <property type="molecule type" value="Genomic_DNA"/>
</dbReference>
<dbReference type="RefSeq" id="YP_874594.1">
    <property type="nucleotide sequence ID" value="NC_008589.1"/>
</dbReference>
<dbReference type="SMR" id="A0T0Y2"/>
<dbReference type="STRING" id="35128.A0T0Y2"/>
<dbReference type="GeneID" id="4524757"/>
<dbReference type="InParanoid" id="A0T0Y2"/>
<dbReference type="GO" id="GO:0009507">
    <property type="term" value="C:chloroplast"/>
    <property type="evidence" value="ECO:0007669"/>
    <property type="project" value="UniProtKB-SubCell"/>
</dbReference>
<dbReference type="GO" id="GO:0005739">
    <property type="term" value="C:mitochondrion"/>
    <property type="evidence" value="ECO:0000318"/>
    <property type="project" value="GO_Central"/>
</dbReference>
<dbReference type="GO" id="GO:1990904">
    <property type="term" value="C:ribonucleoprotein complex"/>
    <property type="evidence" value="ECO:0007669"/>
    <property type="project" value="UniProtKB-KW"/>
</dbReference>
<dbReference type="GO" id="GO:0005840">
    <property type="term" value="C:ribosome"/>
    <property type="evidence" value="ECO:0007669"/>
    <property type="project" value="UniProtKB-KW"/>
</dbReference>
<dbReference type="GO" id="GO:0019843">
    <property type="term" value="F:rRNA binding"/>
    <property type="evidence" value="ECO:0007669"/>
    <property type="project" value="UniProtKB-UniRule"/>
</dbReference>
<dbReference type="GO" id="GO:0003735">
    <property type="term" value="F:structural constituent of ribosome"/>
    <property type="evidence" value="ECO:0000318"/>
    <property type="project" value="GO_Central"/>
</dbReference>
<dbReference type="GO" id="GO:0006412">
    <property type="term" value="P:translation"/>
    <property type="evidence" value="ECO:0007669"/>
    <property type="project" value="UniProtKB-UniRule"/>
</dbReference>
<dbReference type="CDD" id="cd00364">
    <property type="entry name" value="Ribosomal_uS17"/>
    <property type="match status" value="1"/>
</dbReference>
<dbReference type="FunFam" id="2.40.50.140:FF:000311">
    <property type="entry name" value="30S ribosomal protein S17"/>
    <property type="match status" value="1"/>
</dbReference>
<dbReference type="Gene3D" id="2.40.50.140">
    <property type="entry name" value="Nucleic acid-binding proteins"/>
    <property type="match status" value="1"/>
</dbReference>
<dbReference type="HAMAP" id="MF_01345_B">
    <property type="entry name" value="Ribosomal_uS17_B"/>
    <property type="match status" value="1"/>
</dbReference>
<dbReference type="InterPro" id="IPR012340">
    <property type="entry name" value="NA-bd_OB-fold"/>
</dbReference>
<dbReference type="InterPro" id="IPR000266">
    <property type="entry name" value="Ribosomal_uS17"/>
</dbReference>
<dbReference type="InterPro" id="IPR019984">
    <property type="entry name" value="Ribosomal_uS17_bact/chlr"/>
</dbReference>
<dbReference type="InterPro" id="IPR019979">
    <property type="entry name" value="Ribosomal_uS17_CS"/>
</dbReference>
<dbReference type="NCBIfam" id="NF004123">
    <property type="entry name" value="PRK05610.1"/>
    <property type="match status" value="1"/>
</dbReference>
<dbReference type="NCBIfam" id="TIGR03635">
    <property type="entry name" value="uS17_bact"/>
    <property type="match status" value="1"/>
</dbReference>
<dbReference type="PANTHER" id="PTHR10744">
    <property type="entry name" value="40S RIBOSOMAL PROTEIN S11 FAMILY MEMBER"/>
    <property type="match status" value="1"/>
</dbReference>
<dbReference type="PANTHER" id="PTHR10744:SF1">
    <property type="entry name" value="SMALL RIBOSOMAL SUBUNIT PROTEIN US17M"/>
    <property type="match status" value="1"/>
</dbReference>
<dbReference type="Pfam" id="PF00366">
    <property type="entry name" value="Ribosomal_S17"/>
    <property type="match status" value="1"/>
</dbReference>
<dbReference type="PRINTS" id="PR00973">
    <property type="entry name" value="RIBOSOMALS17"/>
</dbReference>
<dbReference type="SUPFAM" id="SSF50249">
    <property type="entry name" value="Nucleic acid-binding proteins"/>
    <property type="match status" value="1"/>
</dbReference>
<dbReference type="PROSITE" id="PS00056">
    <property type="entry name" value="RIBOSOMAL_S17"/>
    <property type="match status" value="1"/>
</dbReference>
<proteinExistence type="inferred from homology"/>
<geneLocation type="chloroplast"/>
<reference key="1">
    <citation type="journal article" date="2007" name="Mol. Genet. Genomics">
        <title>Chloroplast genomes of the diatoms Phaeodactylum tricornutum and Thalassiosira pseudonana: comparison with other plastid genomes of the red lineage.</title>
        <authorList>
            <person name="Oudot-Le Secq M.-P."/>
            <person name="Grimwood J."/>
            <person name="Shapiro H."/>
            <person name="Armbrust E.V."/>
            <person name="Bowler C."/>
            <person name="Green B.R."/>
        </authorList>
    </citation>
    <scope>NUCLEOTIDE SEQUENCE [LARGE SCALE GENOMIC DNA]</scope>
    <source>
        <strain>CCMP1335 / NEPCC58 / CCAP 1085/12</strain>
    </source>
</reference>
<organism>
    <name type="scientific">Thalassiosira pseudonana</name>
    <name type="common">Marine diatom</name>
    <name type="synonym">Cyclotella nana</name>
    <dbReference type="NCBI Taxonomy" id="35128"/>
    <lineage>
        <taxon>Eukaryota</taxon>
        <taxon>Sar</taxon>
        <taxon>Stramenopiles</taxon>
        <taxon>Ochrophyta</taxon>
        <taxon>Bacillariophyta</taxon>
        <taxon>Coscinodiscophyceae</taxon>
        <taxon>Thalassiosirophycidae</taxon>
        <taxon>Thalassiosirales</taxon>
        <taxon>Thalassiosiraceae</taxon>
        <taxon>Thalassiosira</taxon>
    </lineage>
</organism>
<protein>
    <recommendedName>
        <fullName evidence="2">Small ribosomal subunit protein uS17c</fullName>
    </recommendedName>
    <alternativeName>
        <fullName>30S ribosomal protein S17, chloroplastic</fullName>
    </alternativeName>
</protein>
<gene>
    <name type="primary">rps17</name>
</gene>